<keyword id="KW-0004">4Fe-4S</keyword>
<keyword id="KW-0013">ADP-ribosylation</keyword>
<keyword id="KW-0067">ATP-binding</keyword>
<keyword id="KW-0408">Iron</keyword>
<keyword id="KW-0411">Iron-sulfur</keyword>
<keyword id="KW-0479">Metal-binding</keyword>
<keyword id="KW-0535">Nitrogen fixation</keyword>
<keyword id="KW-0547">Nucleotide-binding</keyword>
<keyword id="KW-0560">Oxidoreductase</keyword>
<keyword id="KW-1185">Reference proteome</keyword>
<reference key="1">
    <citation type="journal article" date="1997" name="J. Bacteriol.">
        <title>Complete genome sequence of Methanobacterium thermoautotrophicum deltaH: functional analysis and comparative genomics.</title>
        <authorList>
            <person name="Smith D.R."/>
            <person name="Doucette-Stamm L.A."/>
            <person name="Deloughery C."/>
            <person name="Lee H.-M."/>
            <person name="Dubois J."/>
            <person name="Aldredge T."/>
            <person name="Bashirzadeh R."/>
            <person name="Blakely D."/>
            <person name="Cook R."/>
            <person name="Gilbert K."/>
            <person name="Harrison D."/>
            <person name="Hoang L."/>
            <person name="Keagle P."/>
            <person name="Lumm W."/>
            <person name="Pothier B."/>
            <person name="Qiu D."/>
            <person name="Spadafora R."/>
            <person name="Vicare R."/>
            <person name="Wang Y."/>
            <person name="Wierzbowski J."/>
            <person name="Gibson R."/>
            <person name="Jiwani N."/>
            <person name="Caruso A."/>
            <person name="Bush D."/>
            <person name="Safer H."/>
            <person name="Patwell D."/>
            <person name="Prabhakar S."/>
            <person name="McDougall S."/>
            <person name="Shimer G."/>
            <person name="Goyal A."/>
            <person name="Pietrovski S."/>
            <person name="Church G.M."/>
            <person name="Daniels C.J."/>
            <person name="Mao J.-I."/>
            <person name="Rice P."/>
            <person name="Noelling J."/>
            <person name="Reeve J.N."/>
        </authorList>
    </citation>
    <scope>NUCLEOTIDE SEQUENCE [LARGE SCALE GENOMIC DNA]</scope>
    <source>
        <strain>ATCC 29096 / DSM 1053 / JCM 10044 / NBRC 100330 / Delta H</strain>
    </source>
</reference>
<protein>
    <recommendedName>
        <fullName>Nitrogenase iron protein 1</fullName>
        <ecNumber>1.18.6.1</ecNumber>
    </recommendedName>
    <alternativeName>
        <fullName>Nitrogenase Fe protein 1</fullName>
    </alternativeName>
    <alternativeName>
        <fullName>Nitrogenase component II</fullName>
    </alternativeName>
    <alternativeName>
        <fullName>Nitrogenase reductase</fullName>
    </alternativeName>
</protein>
<feature type="chain" id="PRO_0000139542" description="Nitrogenase iron protein 1">
    <location>
        <begin position="1"/>
        <end position="275"/>
    </location>
</feature>
<feature type="binding site" evidence="2">
    <location>
        <begin position="9"/>
        <end position="16"/>
    </location>
    <ligand>
        <name>ATP</name>
        <dbReference type="ChEBI" id="CHEBI:30616"/>
    </ligand>
</feature>
<feature type="binding site" evidence="1">
    <location>
        <position position="97"/>
    </location>
    <ligand>
        <name>[4Fe-4S] cluster</name>
        <dbReference type="ChEBI" id="CHEBI:49883"/>
        <note>ligand shared between dimeric partners</note>
    </ligand>
</feature>
<feature type="binding site" evidence="1">
    <location>
        <position position="132"/>
    </location>
    <ligand>
        <name>[4Fe-4S] cluster</name>
        <dbReference type="ChEBI" id="CHEBI:49883"/>
        <note>ligand shared between dimeric partners</note>
    </ligand>
</feature>
<feature type="modified residue" description="ADP-ribosylarginine; by dinitrogenase reductase ADP-ribosyltransferase" evidence="1">
    <location>
        <position position="100"/>
    </location>
</feature>
<comment type="function">
    <text evidence="1">The key enzymatic reactions in nitrogen fixation are catalyzed by the nitrogenase complex, which has 2 components: the iron protein and the molybdenum-iron protein.</text>
</comment>
<comment type="catalytic activity">
    <reaction>
        <text>N2 + 8 reduced [2Fe-2S]-[ferredoxin] + 16 ATP + 16 H2O = H2 + 8 oxidized [2Fe-2S]-[ferredoxin] + 2 NH4(+) + 16 ADP + 16 phosphate + 6 H(+)</text>
        <dbReference type="Rhea" id="RHEA:21448"/>
        <dbReference type="Rhea" id="RHEA-COMP:10000"/>
        <dbReference type="Rhea" id="RHEA-COMP:10001"/>
        <dbReference type="ChEBI" id="CHEBI:15377"/>
        <dbReference type="ChEBI" id="CHEBI:15378"/>
        <dbReference type="ChEBI" id="CHEBI:17997"/>
        <dbReference type="ChEBI" id="CHEBI:18276"/>
        <dbReference type="ChEBI" id="CHEBI:28938"/>
        <dbReference type="ChEBI" id="CHEBI:30616"/>
        <dbReference type="ChEBI" id="CHEBI:33737"/>
        <dbReference type="ChEBI" id="CHEBI:33738"/>
        <dbReference type="ChEBI" id="CHEBI:43474"/>
        <dbReference type="ChEBI" id="CHEBI:456216"/>
        <dbReference type="EC" id="1.18.6.1"/>
    </reaction>
</comment>
<comment type="cofactor">
    <cofactor evidence="1">
        <name>[4Fe-4S] cluster</name>
        <dbReference type="ChEBI" id="CHEBI:49883"/>
    </cofactor>
    <text evidence="1">Binds 1 [4Fe-4S] cluster per dimer.</text>
</comment>
<comment type="subunit">
    <text evidence="1">Homodimer.</text>
</comment>
<comment type="PTM">
    <text evidence="1">The reversible ADP-ribosylation of Arg-100 inactivates the nitrogenase reductase and regulates nitrogenase activity.</text>
</comment>
<comment type="similarity">
    <text evidence="3">Belongs to the NifH/BchL/ChlL family.</text>
</comment>
<comment type="sequence caution" evidence="3">
    <conflict type="erroneous initiation">
        <sequence resource="EMBL-CDS" id="AAB86034"/>
    </conflict>
</comment>
<proteinExistence type="inferred from homology"/>
<name>NIFH1_METTH</name>
<accession>O27602</accession>
<organism>
    <name type="scientific">Methanothermobacter thermautotrophicus (strain ATCC 29096 / DSM 1053 / JCM 10044 / NBRC 100330 / Delta H)</name>
    <name type="common">Methanobacterium thermoautotrophicum</name>
    <dbReference type="NCBI Taxonomy" id="187420"/>
    <lineage>
        <taxon>Archaea</taxon>
        <taxon>Methanobacteriati</taxon>
        <taxon>Methanobacteriota</taxon>
        <taxon>Methanomada group</taxon>
        <taxon>Methanobacteria</taxon>
        <taxon>Methanobacteriales</taxon>
        <taxon>Methanobacteriaceae</taxon>
        <taxon>Methanothermobacter</taxon>
    </lineage>
</organism>
<dbReference type="EC" id="1.18.6.1"/>
<dbReference type="EMBL" id="AE000666">
    <property type="protein sequence ID" value="AAB86034.1"/>
    <property type="status" value="ALT_INIT"/>
    <property type="molecule type" value="Genomic_DNA"/>
</dbReference>
<dbReference type="PIR" id="C69075">
    <property type="entry name" value="C69075"/>
</dbReference>
<dbReference type="SMR" id="O27602"/>
<dbReference type="STRING" id="187420.MTH_1560"/>
<dbReference type="PaxDb" id="187420-MTH_1560"/>
<dbReference type="EnsemblBacteria" id="AAB86034">
    <property type="protein sequence ID" value="AAB86034"/>
    <property type="gene ID" value="MTH_1560"/>
</dbReference>
<dbReference type="KEGG" id="mth:MTH_1560"/>
<dbReference type="PATRIC" id="fig|187420.15.peg.1523"/>
<dbReference type="HOGENOM" id="CLU_059373_0_0_2"/>
<dbReference type="InParanoid" id="O27602"/>
<dbReference type="Proteomes" id="UP000005223">
    <property type="component" value="Chromosome"/>
</dbReference>
<dbReference type="GO" id="GO:0051539">
    <property type="term" value="F:4 iron, 4 sulfur cluster binding"/>
    <property type="evidence" value="ECO:0007669"/>
    <property type="project" value="UniProtKB-KW"/>
</dbReference>
<dbReference type="GO" id="GO:0005524">
    <property type="term" value="F:ATP binding"/>
    <property type="evidence" value="ECO:0007669"/>
    <property type="project" value="UniProtKB-UniRule"/>
</dbReference>
<dbReference type="GO" id="GO:0046872">
    <property type="term" value="F:metal ion binding"/>
    <property type="evidence" value="ECO:0007669"/>
    <property type="project" value="UniProtKB-KW"/>
</dbReference>
<dbReference type="GO" id="GO:0016163">
    <property type="term" value="F:nitrogenase activity"/>
    <property type="evidence" value="ECO:0007669"/>
    <property type="project" value="UniProtKB-UniRule"/>
</dbReference>
<dbReference type="GO" id="GO:0009399">
    <property type="term" value="P:nitrogen fixation"/>
    <property type="evidence" value="ECO:0007669"/>
    <property type="project" value="UniProtKB-UniRule"/>
</dbReference>
<dbReference type="CDD" id="cd02040">
    <property type="entry name" value="NifH"/>
    <property type="match status" value="1"/>
</dbReference>
<dbReference type="Gene3D" id="3.40.50.300">
    <property type="entry name" value="P-loop containing nucleotide triphosphate hydrolases"/>
    <property type="match status" value="1"/>
</dbReference>
<dbReference type="HAMAP" id="MF_00533">
    <property type="entry name" value="NifH"/>
    <property type="match status" value="1"/>
</dbReference>
<dbReference type="InterPro" id="IPR030655">
    <property type="entry name" value="NifH/chlL_CS"/>
</dbReference>
<dbReference type="InterPro" id="IPR000392">
    <property type="entry name" value="NifH/frxC"/>
</dbReference>
<dbReference type="InterPro" id="IPR005977">
    <property type="entry name" value="Nitrogenase_Fe_NifH"/>
</dbReference>
<dbReference type="InterPro" id="IPR027417">
    <property type="entry name" value="P-loop_NTPase"/>
</dbReference>
<dbReference type="NCBIfam" id="TIGR01287">
    <property type="entry name" value="nifH"/>
    <property type="match status" value="1"/>
</dbReference>
<dbReference type="PANTHER" id="PTHR42864">
    <property type="entry name" value="LIGHT-INDEPENDENT PROTOCHLOROPHYLLIDE REDUCTASE IRON-SULFUR ATP-BINDING PROTEIN"/>
    <property type="match status" value="1"/>
</dbReference>
<dbReference type="PANTHER" id="PTHR42864:SF2">
    <property type="entry name" value="LIGHT-INDEPENDENT PROTOCHLOROPHYLLIDE REDUCTASE IRON-SULFUR ATP-BINDING PROTEIN"/>
    <property type="match status" value="1"/>
</dbReference>
<dbReference type="Pfam" id="PF00142">
    <property type="entry name" value="Fer4_NifH"/>
    <property type="match status" value="1"/>
</dbReference>
<dbReference type="PIRSF" id="PIRSF000363">
    <property type="entry name" value="Nitrogenase_iron"/>
    <property type="match status" value="1"/>
</dbReference>
<dbReference type="PRINTS" id="PR00091">
    <property type="entry name" value="NITROGNASEII"/>
</dbReference>
<dbReference type="SUPFAM" id="SSF52540">
    <property type="entry name" value="P-loop containing nucleoside triphosphate hydrolases"/>
    <property type="match status" value="1"/>
</dbReference>
<dbReference type="PROSITE" id="PS00746">
    <property type="entry name" value="NIFH_FRXC_1"/>
    <property type="match status" value="1"/>
</dbReference>
<dbReference type="PROSITE" id="PS00692">
    <property type="entry name" value="NIFH_FRXC_2"/>
    <property type="match status" value="1"/>
</dbReference>
<dbReference type="PROSITE" id="PS51026">
    <property type="entry name" value="NIFH_FRXC_3"/>
    <property type="match status" value="1"/>
</dbReference>
<evidence type="ECO:0000250" key="1"/>
<evidence type="ECO:0000255" key="2"/>
<evidence type="ECO:0000305" key="3"/>
<gene>
    <name type="primary">nifH1</name>
    <name type="ordered locus">MTH_1560</name>
</gene>
<sequence length="275" mass="30280">MVRKIAIYGKGGIGKSTTQQNTAAAMSYFHGKNVMIHGCDPKADSTRLILGGKMQTTMMDTLRELGEVACTPDKVIETGFGGIKCVESGGPEPGVGCAGRGVITAITLMERHGVYEKDLDFVFFDVLGDVVCGGFAMPVRDGKAEEIYIVASGEMMALYAANNICKGMVKYARQSGVRLGGIICNSRNVDGEKELLEEFCERIGTQMIHFVPRDNIVQKAEFNKKSVIEFDPECNQSQEYRELARKIIENKDFVIPEPMTMDEMEELVVKYGVMD</sequence>